<feature type="chain" id="PRO_0000104333" description="Large ribosomal subunit protein uL11">
    <location>
        <begin position="1"/>
        <end position="142"/>
    </location>
</feature>
<dbReference type="EMBL" id="AE004439">
    <property type="protein sequence ID" value="AAK03827.1"/>
    <property type="molecule type" value="Genomic_DNA"/>
</dbReference>
<dbReference type="RefSeq" id="WP_005718823.1">
    <property type="nucleotide sequence ID" value="NC_002663.1"/>
</dbReference>
<dbReference type="SMR" id="Q9CK85"/>
<dbReference type="STRING" id="272843.PM1743"/>
<dbReference type="EnsemblBacteria" id="AAK03827">
    <property type="protein sequence ID" value="AAK03827"/>
    <property type="gene ID" value="PM1743"/>
</dbReference>
<dbReference type="GeneID" id="77206673"/>
<dbReference type="KEGG" id="pmu:PM1743"/>
<dbReference type="HOGENOM" id="CLU_074237_2_0_6"/>
<dbReference type="OrthoDB" id="9802408at2"/>
<dbReference type="Proteomes" id="UP000000809">
    <property type="component" value="Chromosome"/>
</dbReference>
<dbReference type="GO" id="GO:0022625">
    <property type="term" value="C:cytosolic large ribosomal subunit"/>
    <property type="evidence" value="ECO:0007669"/>
    <property type="project" value="TreeGrafter"/>
</dbReference>
<dbReference type="GO" id="GO:0070180">
    <property type="term" value="F:large ribosomal subunit rRNA binding"/>
    <property type="evidence" value="ECO:0007669"/>
    <property type="project" value="UniProtKB-UniRule"/>
</dbReference>
<dbReference type="GO" id="GO:0003735">
    <property type="term" value="F:structural constituent of ribosome"/>
    <property type="evidence" value="ECO:0007669"/>
    <property type="project" value="InterPro"/>
</dbReference>
<dbReference type="GO" id="GO:0006412">
    <property type="term" value="P:translation"/>
    <property type="evidence" value="ECO:0007669"/>
    <property type="project" value="UniProtKB-UniRule"/>
</dbReference>
<dbReference type="CDD" id="cd00349">
    <property type="entry name" value="Ribosomal_L11"/>
    <property type="match status" value="1"/>
</dbReference>
<dbReference type="FunFam" id="1.10.10.250:FF:000001">
    <property type="entry name" value="50S ribosomal protein L11"/>
    <property type="match status" value="1"/>
</dbReference>
<dbReference type="FunFam" id="3.30.1550.10:FF:000001">
    <property type="entry name" value="50S ribosomal protein L11"/>
    <property type="match status" value="1"/>
</dbReference>
<dbReference type="Gene3D" id="1.10.10.250">
    <property type="entry name" value="Ribosomal protein L11, C-terminal domain"/>
    <property type="match status" value="1"/>
</dbReference>
<dbReference type="Gene3D" id="3.30.1550.10">
    <property type="entry name" value="Ribosomal protein L11/L12, N-terminal domain"/>
    <property type="match status" value="1"/>
</dbReference>
<dbReference type="HAMAP" id="MF_00736">
    <property type="entry name" value="Ribosomal_uL11"/>
    <property type="match status" value="1"/>
</dbReference>
<dbReference type="InterPro" id="IPR000911">
    <property type="entry name" value="Ribosomal_uL11"/>
</dbReference>
<dbReference type="InterPro" id="IPR006519">
    <property type="entry name" value="Ribosomal_uL11_bac-typ"/>
</dbReference>
<dbReference type="InterPro" id="IPR020783">
    <property type="entry name" value="Ribosomal_uL11_C"/>
</dbReference>
<dbReference type="InterPro" id="IPR036769">
    <property type="entry name" value="Ribosomal_uL11_C_sf"/>
</dbReference>
<dbReference type="InterPro" id="IPR020784">
    <property type="entry name" value="Ribosomal_uL11_N"/>
</dbReference>
<dbReference type="InterPro" id="IPR036796">
    <property type="entry name" value="Ribosomal_uL11_N_sf"/>
</dbReference>
<dbReference type="NCBIfam" id="TIGR01632">
    <property type="entry name" value="L11_bact"/>
    <property type="match status" value="1"/>
</dbReference>
<dbReference type="PANTHER" id="PTHR11661">
    <property type="entry name" value="60S RIBOSOMAL PROTEIN L12"/>
    <property type="match status" value="1"/>
</dbReference>
<dbReference type="PANTHER" id="PTHR11661:SF1">
    <property type="entry name" value="LARGE RIBOSOMAL SUBUNIT PROTEIN UL11M"/>
    <property type="match status" value="1"/>
</dbReference>
<dbReference type="Pfam" id="PF00298">
    <property type="entry name" value="Ribosomal_L11"/>
    <property type="match status" value="1"/>
</dbReference>
<dbReference type="Pfam" id="PF03946">
    <property type="entry name" value="Ribosomal_L11_N"/>
    <property type="match status" value="1"/>
</dbReference>
<dbReference type="SMART" id="SM00649">
    <property type="entry name" value="RL11"/>
    <property type="match status" value="1"/>
</dbReference>
<dbReference type="SUPFAM" id="SSF54747">
    <property type="entry name" value="Ribosomal L11/L12e N-terminal domain"/>
    <property type="match status" value="1"/>
</dbReference>
<dbReference type="SUPFAM" id="SSF46906">
    <property type="entry name" value="Ribosomal protein L11, C-terminal domain"/>
    <property type="match status" value="1"/>
</dbReference>
<dbReference type="PROSITE" id="PS00359">
    <property type="entry name" value="RIBOSOMAL_L11"/>
    <property type="match status" value="1"/>
</dbReference>
<accession>Q9CK85</accession>
<evidence type="ECO:0000255" key="1">
    <source>
        <dbReference type="HAMAP-Rule" id="MF_00736"/>
    </source>
</evidence>
<evidence type="ECO:0000305" key="2"/>
<proteinExistence type="inferred from homology"/>
<gene>
    <name evidence="1" type="primary">rplK</name>
    <name evidence="1" type="synonym">rpl11</name>
    <name type="ordered locus">PM1743</name>
</gene>
<sequence length="142" mass="14934">MAKKVQAYVKLQVAAGMANPSPPVGPALGQQGVNIMEFCKAFNARTESLEKGLPIPVVITVYADRSFTFITKTPPAAVLLKKAAGIKSGSGKPNKDKVGKVTLEQVRQIAETKAADMTGSSIETKMKSIAGTARSMGLVVEE</sequence>
<reference key="1">
    <citation type="journal article" date="2001" name="Proc. Natl. Acad. Sci. U.S.A.">
        <title>Complete genomic sequence of Pasteurella multocida Pm70.</title>
        <authorList>
            <person name="May B.J."/>
            <person name="Zhang Q."/>
            <person name="Li L.L."/>
            <person name="Paustian M.L."/>
            <person name="Whittam T.S."/>
            <person name="Kapur V."/>
        </authorList>
    </citation>
    <scope>NUCLEOTIDE SEQUENCE [LARGE SCALE GENOMIC DNA]</scope>
    <source>
        <strain>Pm70</strain>
    </source>
</reference>
<comment type="function">
    <text evidence="1">Forms part of the ribosomal stalk which helps the ribosome interact with GTP-bound translation factors.</text>
</comment>
<comment type="subunit">
    <text evidence="1">Part of the ribosomal stalk of the 50S ribosomal subunit. Interacts with L10 and the large rRNA to form the base of the stalk. L10 forms an elongated spine to which L12 dimers bind in a sequential fashion forming a multimeric L10(L12)X complex.</text>
</comment>
<comment type="PTM">
    <text evidence="1">One or more lysine residues are methylated.</text>
</comment>
<comment type="similarity">
    <text evidence="1">Belongs to the universal ribosomal protein uL11 family.</text>
</comment>
<keyword id="KW-0488">Methylation</keyword>
<keyword id="KW-1185">Reference proteome</keyword>
<keyword id="KW-0687">Ribonucleoprotein</keyword>
<keyword id="KW-0689">Ribosomal protein</keyword>
<keyword id="KW-0694">RNA-binding</keyword>
<keyword id="KW-0699">rRNA-binding</keyword>
<organism>
    <name type="scientific">Pasteurella multocida (strain Pm70)</name>
    <dbReference type="NCBI Taxonomy" id="272843"/>
    <lineage>
        <taxon>Bacteria</taxon>
        <taxon>Pseudomonadati</taxon>
        <taxon>Pseudomonadota</taxon>
        <taxon>Gammaproteobacteria</taxon>
        <taxon>Pasteurellales</taxon>
        <taxon>Pasteurellaceae</taxon>
        <taxon>Pasteurella</taxon>
    </lineage>
</organism>
<protein>
    <recommendedName>
        <fullName evidence="1">Large ribosomal subunit protein uL11</fullName>
    </recommendedName>
    <alternativeName>
        <fullName evidence="2">50S ribosomal protein L11</fullName>
    </alternativeName>
</protein>
<name>RL11_PASMU</name>